<feature type="chain" id="PRO_0000378106" description="Zinc finger protein 285">
    <location>
        <begin position="1"/>
        <end position="590"/>
    </location>
</feature>
<feature type="domain" description="KRAB" evidence="2">
    <location>
        <begin position="8"/>
        <end position="86"/>
    </location>
</feature>
<feature type="zinc finger region" description="C2H2-type 1" evidence="1">
    <location>
        <begin position="232"/>
        <end position="254"/>
    </location>
</feature>
<feature type="zinc finger region" description="C2H2-type 2; degenerate" evidence="1">
    <location>
        <begin position="260"/>
        <end position="282"/>
    </location>
</feature>
<feature type="zinc finger region" description="C2H2-type 3" evidence="1">
    <location>
        <begin position="316"/>
        <end position="338"/>
    </location>
</feature>
<feature type="zinc finger region" description="C2H2-type 4" evidence="1">
    <location>
        <begin position="344"/>
        <end position="366"/>
    </location>
</feature>
<feature type="zinc finger region" description="C2H2-type 5" evidence="1">
    <location>
        <begin position="372"/>
        <end position="394"/>
    </location>
</feature>
<feature type="zinc finger region" description="C2H2-type 6" evidence="1">
    <location>
        <begin position="400"/>
        <end position="422"/>
    </location>
</feature>
<feature type="zinc finger region" description="C2H2-type 7" evidence="1">
    <location>
        <begin position="428"/>
        <end position="450"/>
    </location>
</feature>
<feature type="zinc finger region" description="C2H2-type 8" evidence="1">
    <location>
        <begin position="456"/>
        <end position="478"/>
    </location>
</feature>
<feature type="zinc finger region" description="C2H2-type 9" evidence="1">
    <location>
        <begin position="484"/>
        <end position="506"/>
    </location>
</feature>
<feature type="zinc finger region" description="C2H2-type 10" evidence="1">
    <location>
        <begin position="512"/>
        <end position="534"/>
    </location>
</feature>
<feature type="zinc finger region" description="C2H2-type 11" evidence="1">
    <location>
        <begin position="540"/>
        <end position="562"/>
    </location>
</feature>
<feature type="splice variant" id="VSP_037502" description="In isoform 2." evidence="3 4">
    <location>
        <begin position="1"/>
        <end position="155"/>
    </location>
</feature>
<feature type="sequence variant" id="VAR_057972" description="In dbSNP:rs2571089.">
    <original>S</original>
    <variation>N</variation>
    <location>
        <position position="208"/>
    </location>
</feature>
<feature type="sequence variant" id="VAR_057973" description="In dbSNP:rs12610859.">
    <original>G</original>
    <variation>R</variation>
    <location>
        <position position="536"/>
    </location>
</feature>
<gene>
    <name type="primary">ZNF285</name>
    <name type="synonym">ZNF285A</name>
</gene>
<dbReference type="EMBL" id="AK055309">
    <property type="protein sequence ID" value="BAB70901.1"/>
    <property type="molecule type" value="mRNA"/>
</dbReference>
<dbReference type="EMBL" id="AC138473">
    <property type="status" value="NOT_ANNOTATED_CDS"/>
    <property type="molecule type" value="Genomic_DNA"/>
</dbReference>
<dbReference type="EMBL" id="BC117300">
    <property type="protein sequence ID" value="AAI17301.1"/>
    <property type="molecule type" value="mRNA"/>
</dbReference>
<dbReference type="EMBL" id="BC117302">
    <property type="protein sequence ID" value="AAI17303.1"/>
    <property type="molecule type" value="mRNA"/>
</dbReference>
<dbReference type="EMBL" id="BC069384">
    <property type="protein sequence ID" value="AAH69384.2"/>
    <property type="molecule type" value="mRNA"/>
</dbReference>
<dbReference type="EMBL" id="BC074875">
    <property type="protein sequence ID" value="AAH74875.2"/>
    <property type="molecule type" value="mRNA"/>
</dbReference>
<dbReference type="CCDS" id="CCDS12638.1">
    <molecule id="Q96NJ3-1"/>
</dbReference>
<dbReference type="RefSeq" id="NP_001278417.1">
    <property type="nucleotide sequence ID" value="NM_001291488.1"/>
</dbReference>
<dbReference type="RefSeq" id="NP_001278418.1">
    <molecule id="Q96NJ3-1"/>
    <property type="nucleotide sequence ID" value="NM_001291489.2"/>
</dbReference>
<dbReference type="RefSeq" id="NP_001278419.1">
    <molecule id="Q96NJ3-2"/>
    <property type="nucleotide sequence ID" value="NM_001291490.2"/>
</dbReference>
<dbReference type="RefSeq" id="NP_001278420.1">
    <molecule id="Q96NJ3-2"/>
    <property type="nucleotide sequence ID" value="NM_001291491.2"/>
</dbReference>
<dbReference type="RefSeq" id="NP_689567.4">
    <molecule id="Q96NJ3-1"/>
    <property type="nucleotide sequence ID" value="NM_152354.5"/>
</dbReference>
<dbReference type="SMR" id="Q96NJ3"/>
<dbReference type="BioGRID" id="117930">
    <property type="interactions" value="1"/>
</dbReference>
<dbReference type="IntAct" id="Q96NJ3">
    <property type="interactions" value="3"/>
</dbReference>
<dbReference type="STRING" id="9606.ENSP00000464788"/>
<dbReference type="GlyGen" id="Q96NJ3">
    <property type="glycosylation" value="1 site, 1 O-linked glycan (1 site)"/>
</dbReference>
<dbReference type="iPTMnet" id="Q96NJ3"/>
<dbReference type="PhosphoSitePlus" id="Q96NJ3"/>
<dbReference type="BioMuta" id="ZNF285"/>
<dbReference type="DMDM" id="239938813"/>
<dbReference type="jPOST" id="Q96NJ3"/>
<dbReference type="MassIVE" id="Q96NJ3"/>
<dbReference type="PaxDb" id="9606-ENSP00000464788"/>
<dbReference type="PeptideAtlas" id="Q96NJ3"/>
<dbReference type="ProteomicsDB" id="77520">
    <molecule id="Q96NJ3-1"/>
</dbReference>
<dbReference type="ProteomicsDB" id="77521">
    <molecule id="Q96NJ3-2"/>
</dbReference>
<dbReference type="Antibodypedia" id="65032">
    <property type="antibodies" value="60 antibodies from 11 providers"/>
</dbReference>
<dbReference type="DNASU" id="26974"/>
<dbReference type="Ensembl" id="ENST00000544719.6">
    <molecule id="Q96NJ3-1"/>
    <property type="protein sequence ID" value="ENSP00000439431.2"/>
    <property type="gene ID" value="ENSG00000267508.6"/>
</dbReference>
<dbReference type="Ensembl" id="ENST00000614994.5">
    <molecule id="Q96NJ3-1"/>
    <property type="protein sequence ID" value="ENSP00000483662.1"/>
    <property type="gene ID" value="ENSG00000267508.6"/>
</dbReference>
<dbReference type="GeneID" id="26974"/>
<dbReference type="KEGG" id="hsa:26974"/>
<dbReference type="MANE-Select" id="ENST00000614994.5">
    <property type="protein sequence ID" value="ENSP00000483662.1"/>
    <property type="RefSeq nucleotide sequence ID" value="NM_152354.6"/>
    <property type="RefSeq protein sequence ID" value="NP_689567.4"/>
</dbReference>
<dbReference type="UCSC" id="uc002ozd.5">
    <molecule id="Q96NJ3-1"/>
    <property type="organism name" value="human"/>
</dbReference>
<dbReference type="AGR" id="HGNC:13079"/>
<dbReference type="CTD" id="26974"/>
<dbReference type="DisGeNET" id="26974"/>
<dbReference type="GeneCards" id="ZNF285"/>
<dbReference type="HGNC" id="HGNC:13079">
    <property type="gene designation" value="ZNF285"/>
</dbReference>
<dbReference type="HPA" id="ENSG00000267508">
    <property type="expression patterns" value="Low tissue specificity"/>
</dbReference>
<dbReference type="neXtProt" id="NX_Q96NJ3"/>
<dbReference type="OpenTargets" id="ENSG00000267508"/>
<dbReference type="PharmGKB" id="PA165394833"/>
<dbReference type="VEuPathDB" id="HostDB:ENSG00000267508"/>
<dbReference type="eggNOG" id="KOG1721">
    <property type="taxonomic scope" value="Eukaryota"/>
</dbReference>
<dbReference type="GeneTree" id="ENSGT00940000163580"/>
<dbReference type="HOGENOM" id="CLU_002678_0_2_1"/>
<dbReference type="InParanoid" id="Q96NJ3"/>
<dbReference type="OMA" id="VHYKTHS"/>
<dbReference type="OrthoDB" id="4748970at2759"/>
<dbReference type="PAN-GO" id="Q96NJ3">
    <property type="GO annotations" value="4 GO annotations based on evolutionary models"/>
</dbReference>
<dbReference type="PhylomeDB" id="Q96NJ3"/>
<dbReference type="TreeFam" id="TF350845"/>
<dbReference type="PathwayCommons" id="Q96NJ3"/>
<dbReference type="Reactome" id="R-HSA-212436">
    <property type="pathway name" value="Generic Transcription Pathway"/>
</dbReference>
<dbReference type="SignaLink" id="Q96NJ3"/>
<dbReference type="BioGRID-ORCS" id="26974">
    <property type="hits" value="126 hits in 1126 CRISPR screens"/>
</dbReference>
<dbReference type="GenomeRNAi" id="26974"/>
<dbReference type="Pharos" id="Q96NJ3">
    <property type="development level" value="Tdark"/>
</dbReference>
<dbReference type="PRO" id="PR:Q96NJ3"/>
<dbReference type="Proteomes" id="UP000005640">
    <property type="component" value="Chromosome 19"/>
</dbReference>
<dbReference type="RNAct" id="Q96NJ3">
    <property type="molecule type" value="protein"/>
</dbReference>
<dbReference type="Bgee" id="ENSG00000267508">
    <property type="expression patterns" value="Expressed in secondary oocyte and 135 other cell types or tissues"/>
</dbReference>
<dbReference type="ExpressionAtlas" id="Q96NJ3">
    <property type="expression patterns" value="baseline and differential"/>
</dbReference>
<dbReference type="GO" id="GO:0005634">
    <property type="term" value="C:nucleus"/>
    <property type="evidence" value="ECO:0007669"/>
    <property type="project" value="UniProtKB-SubCell"/>
</dbReference>
<dbReference type="GO" id="GO:0003677">
    <property type="term" value="F:DNA binding"/>
    <property type="evidence" value="ECO:0007669"/>
    <property type="project" value="UniProtKB-KW"/>
</dbReference>
<dbReference type="GO" id="GO:0003700">
    <property type="term" value="F:DNA-binding transcription factor activity"/>
    <property type="evidence" value="ECO:0000303"/>
    <property type="project" value="ARUK-UCL"/>
</dbReference>
<dbReference type="GO" id="GO:0008270">
    <property type="term" value="F:zinc ion binding"/>
    <property type="evidence" value="ECO:0007669"/>
    <property type="project" value="UniProtKB-KW"/>
</dbReference>
<dbReference type="CDD" id="cd07765">
    <property type="entry name" value="KRAB_A-box"/>
    <property type="match status" value="1"/>
</dbReference>
<dbReference type="FunFam" id="3.30.160.60:FF:000029">
    <property type="entry name" value="GLI family zinc finger 4"/>
    <property type="match status" value="1"/>
</dbReference>
<dbReference type="FunFam" id="3.30.160.60:FF:000295">
    <property type="entry name" value="zinc finger protein 19"/>
    <property type="match status" value="1"/>
</dbReference>
<dbReference type="FunFam" id="3.30.160.60:FF:000726">
    <property type="entry name" value="Zinc finger protein 214"/>
    <property type="match status" value="2"/>
</dbReference>
<dbReference type="FunFam" id="3.30.160.60:FF:002685">
    <property type="entry name" value="Zinc finger protein 285"/>
    <property type="match status" value="1"/>
</dbReference>
<dbReference type="FunFam" id="3.30.160.60:FF:000522">
    <property type="entry name" value="zinc finger protein 285"/>
    <property type="match status" value="1"/>
</dbReference>
<dbReference type="FunFam" id="3.30.160.60:FF:000848">
    <property type="entry name" value="Zinc finger protein 35"/>
    <property type="match status" value="1"/>
</dbReference>
<dbReference type="FunFam" id="3.30.160.60:FF:000663">
    <property type="entry name" value="Zinc finger protein 45"/>
    <property type="match status" value="2"/>
</dbReference>
<dbReference type="FunFam" id="3.30.160.60:FF:002331">
    <property type="entry name" value="Zinc finger protein 672"/>
    <property type="match status" value="1"/>
</dbReference>
<dbReference type="Gene3D" id="6.10.140.140">
    <property type="match status" value="1"/>
</dbReference>
<dbReference type="Gene3D" id="3.30.160.60">
    <property type="entry name" value="Classic Zinc Finger"/>
    <property type="match status" value="10"/>
</dbReference>
<dbReference type="InterPro" id="IPR050752">
    <property type="entry name" value="C2H2-ZF_domain"/>
</dbReference>
<dbReference type="InterPro" id="IPR001909">
    <property type="entry name" value="KRAB"/>
</dbReference>
<dbReference type="InterPro" id="IPR036051">
    <property type="entry name" value="KRAB_dom_sf"/>
</dbReference>
<dbReference type="InterPro" id="IPR036236">
    <property type="entry name" value="Znf_C2H2_sf"/>
</dbReference>
<dbReference type="InterPro" id="IPR013087">
    <property type="entry name" value="Znf_C2H2_type"/>
</dbReference>
<dbReference type="PANTHER" id="PTHR24384">
    <property type="entry name" value="FINGER PUTATIVE TRANSCRIPTION FACTOR FAMILY-RELATED"/>
    <property type="match status" value="1"/>
</dbReference>
<dbReference type="PANTHER" id="PTHR24384:SF246">
    <property type="entry name" value="GENE, 19965-RELATED"/>
    <property type="match status" value="1"/>
</dbReference>
<dbReference type="Pfam" id="PF01352">
    <property type="entry name" value="KRAB"/>
    <property type="match status" value="1"/>
</dbReference>
<dbReference type="Pfam" id="PF00096">
    <property type="entry name" value="zf-C2H2"/>
    <property type="match status" value="9"/>
</dbReference>
<dbReference type="SMART" id="SM00349">
    <property type="entry name" value="KRAB"/>
    <property type="match status" value="1"/>
</dbReference>
<dbReference type="SMART" id="SM00355">
    <property type="entry name" value="ZnF_C2H2"/>
    <property type="match status" value="11"/>
</dbReference>
<dbReference type="SUPFAM" id="SSF57667">
    <property type="entry name" value="beta-beta-alpha zinc fingers"/>
    <property type="match status" value="6"/>
</dbReference>
<dbReference type="SUPFAM" id="SSF109640">
    <property type="entry name" value="KRAB domain (Kruppel-associated box)"/>
    <property type="match status" value="1"/>
</dbReference>
<dbReference type="PROSITE" id="PS50805">
    <property type="entry name" value="KRAB"/>
    <property type="match status" value="1"/>
</dbReference>
<dbReference type="PROSITE" id="PS00028">
    <property type="entry name" value="ZINC_FINGER_C2H2_1"/>
    <property type="match status" value="10"/>
</dbReference>
<dbReference type="PROSITE" id="PS50157">
    <property type="entry name" value="ZINC_FINGER_C2H2_2"/>
    <property type="match status" value="11"/>
</dbReference>
<reference key="1">
    <citation type="journal article" date="2004" name="Nat. Genet.">
        <title>Complete sequencing and characterization of 21,243 full-length human cDNAs.</title>
        <authorList>
            <person name="Ota T."/>
            <person name="Suzuki Y."/>
            <person name="Nishikawa T."/>
            <person name="Otsuki T."/>
            <person name="Sugiyama T."/>
            <person name="Irie R."/>
            <person name="Wakamatsu A."/>
            <person name="Hayashi K."/>
            <person name="Sato H."/>
            <person name="Nagai K."/>
            <person name="Kimura K."/>
            <person name="Makita H."/>
            <person name="Sekine M."/>
            <person name="Obayashi M."/>
            <person name="Nishi T."/>
            <person name="Shibahara T."/>
            <person name="Tanaka T."/>
            <person name="Ishii S."/>
            <person name="Yamamoto J."/>
            <person name="Saito K."/>
            <person name="Kawai Y."/>
            <person name="Isono Y."/>
            <person name="Nakamura Y."/>
            <person name="Nagahari K."/>
            <person name="Murakami K."/>
            <person name="Yasuda T."/>
            <person name="Iwayanagi T."/>
            <person name="Wagatsuma M."/>
            <person name="Shiratori A."/>
            <person name="Sudo H."/>
            <person name="Hosoiri T."/>
            <person name="Kaku Y."/>
            <person name="Kodaira H."/>
            <person name="Kondo H."/>
            <person name="Sugawara M."/>
            <person name="Takahashi M."/>
            <person name="Kanda K."/>
            <person name="Yokoi T."/>
            <person name="Furuya T."/>
            <person name="Kikkawa E."/>
            <person name="Omura Y."/>
            <person name="Abe K."/>
            <person name="Kamihara K."/>
            <person name="Katsuta N."/>
            <person name="Sato K."/>
            <person name="Tanikawa M."/>
            <person name="Yamazaki M."/>
            <person name="Ninomiya K."/>
            <person name="Ishibashi T."/>
            <person name="Yamashita H."/>
            <person name="Murakawa K."/>
            <person name="Fujimori K."/>
            <person name="Tanai H."/>
            <person name="Kimata M."/>
            <person name="Watanabe M."/>
            <person name="Hiraoka S."/>
            <person name="Chiba Y."/>
            <person name="Ishida S."/>
            <person name="Ono Y."/>
            <person name="Takiguchi S."/>
            <person name="Watanabe S."/>
            <person name="Yosida M."/>
            <person name="Hotuta T."/>
            <person name="Kusano J."/>
            <person name="Kanehori K."/>
            <person name="Takahashi-Fujii A."/>
            <person name="Hara H."/>
            <person name="Tanase T.-O."/>
            <person name="Nomura Y."/>
            <person name="Togiya S."/>
            <person name="Komai F."/>
            <person name="Hara R."/>
            <person name="Takeuchi K."/>
            <person name="Arita M."/>
            <person name="Imose N."/>
            <person name="Musashino K."/>
            <person name="Yuuki H."/>
            <person name="Oshima A."/>
            <person name="Sasaki N."/>
            <person name="Aotsuka S."/>
            <person name="Yoshikawa Y."/>
            <person name="Matsunawa H."/>
            <person name="Ichihara T."/>
            <person name="Shiohata N."/>
            <person name="Sano S."/>
            <person name="Moriya S."/>
            <person name="Momiyama H."/>
            <person name="Satoh N."/>
            <person name="Takami S."/>
            <person name="Terashima Y."/>
            <person name="Suzuki O."/>
            <person name="Nakagawa S."/>
            <person name="Senoh A."/>
            <person name="Mizoguchi H."/>
            <person name="Goto Y."/>
            <person name="Shimizu F."/>
            <person name="Wakebe H."/>
            <person name="Hishigaki H."/>
            <person name="Watanabe T."/>
            <person name="Sugiyama A."/>
            <person name="Takemoto M."/>
            <person name="Kawakami B."/>
            <person name="Yamazaki M."/>
            <person name="Watanabe K."/>
            <person name="Kumagai A."/>
            <person name="Itakura S."/>
            <person name="Fukuzumi Y."/>
            <person name="Fujimori Y."/>
            <person name="Komiyama M."/>
            <person name="Tashiro H."/>
            <person name="Tanigami A."/>
            <person name="Fujiwara T."/>
            <person name="Ono T."/>
            <person name="Yamada K."/>
            <person name="Fujii Y."/>
            <person name="Ozaki K."/>
            <person name="Hirao M."/>
            <person name="Ohmori Y."/>
            <person name="Kawabata A."/>
            <person name="Hikiji T."/>
            <person name="Kobatake N."/>
            <person name="Inagaki H."/>
            <person name="Ikema Y."/>
            <person name="Okamoto S."/>
            <person name="Okitani R."/>
            <person name="Kawakami T."/>
            <person name="Noguchi S."/>
            <person name="Itoh T."/>
            <person name="Shigeta K."/>
            <person name="Senba T."/>
            <person name="Matsumura K."/>
            <person name="Nakajima Y."/>
            <person name="Mizuno T."/>
            <person name="Morinaga M."/>
            <person name="Sasaki M."/>
            <person name="Togashi T."/>
            <person name="Oyama M."/>
            <person name="Hata H."/>
            <person name="Watanabe M."/>
            <person name="Komatsu T."/>
            <person name="Mizushima-Sugano J."/>
            <person name="Satoh T."/>
            <person name="Shirai Y."/>
            <person name="Takahashi Y."/>
            <person name="Nakagawa K."/>
            <person name="Okumura K."/>
            <person name="Nagase T."/>
            <person name="Nomura N."/>
            <person name="Kikuchi H."/>
            <person name="Masuho Y."/>
            <person name="Yamashita R."/>
            <person name="Nakai K."/>
            <person name="Yada T."/>
            <person name="Nakamura Y."/>
            <person name="Ohara O."/>
            <person name="Isogai T."/>
            <person name="Sugano S."/>
        </authorList>
    </citation>
    <scope>NUCLEOTIDE SEQUENCE [LARGE SCALE MRNA] (ISOFORM 2)</scope>
    <source>
        <tissue>Brain</tissue>
    </source>
</reference>
<reference key="2">
    <citation type="journal article" date="2004" name="Nature">
        <title>The DNA sequence and biology of human chromosome 19.</title>
        <authorList>
            <person name="Grimwood J."/>
            <person name="Gordon L.A."/>
            <person name="Olsen A.S."/>
            <person name="Terry A."/>
            <person name="Schmutz J."/>
            <person name="Lamerdin J.E."/>
            <person name="Hellsten U."/>
            <person name="Goodstein D."/>
            <person name="Couronne O."/>
            <person name="Tran-Gyamfi M."/>
            <person name="Aerts A."/>
            <person name="Altherr M."/>
            <person name="Ashworth L."/>
            <person name="Bajorek E."/>
            <person name="Black S."/>
            <person name="Branscomb E."/>
            <person name="Caenepeel S."/>
            <person name="Carrano A.V."/>
            <person name="Caoile C."/>
            <person name="Chan Y.M."/>
            <person name="Christensen M."/>
            <person name="Cleland C.A."/>
            <person name="Copeland A."/>
            <person name="Dalin E."/>
            <person name="Dehal P."/>
            <person name="Denys M."/>
            <person name="Detter J.C."/>
            <person name="Escobar J."/>
            <person name="Flowers D."/>
            <person name="Fotopulos D."/>
            <person name="Garcia C."/>
            <person name="Georgescu A.M."/>
            <person name="Glavina T."/>
            <person name="Gomez M."/>
            <person name="Gonzales E."/>
            <person name="Groza M."/>
            <person name="Hammon N."/>
            <person name="Hawkins T."/>
            <person name="Haydu L."/>
            <person name="Ho I."/>
            <person name="Huang W."/>
            <person name="Israni S."/>
            <person name="Jett J."/>
            <person name="Kadner K."/>
            <person name="Kimball H."/>
            <person name="Kobayashi A."/>
            <person name="Larionov V."/>
            <person name="Leem S.-H."/>
            <person name="Lopez F."/>
            <person name="Lou Y."/>
            <person name="Lowry S."/>
            <person name="Malfatti S."/>
            <person name="Martinez D."/>
            <person name="McCready P.M."/>
            <person name="Medina C."/>
            <person name="Morgan J."/>
            <person name="Nelson K."/>
            <person name="Nolan M."/>
            <person name="Ovcharenko I."/>
            <person name="Pitluck S."/>
            <person name="Pollard M."/>
            <person name="Popkie A.P."/>
            <person name="Predki P."/>
            <person name="Quan G."/>
            <person name="Ramirez L."/>
            <person name="Rash S."/>
            <person name="Retterer J."/>
            <person name="Rodriguez A."/>
            <person name="Rogers S."/>
            <person name="Salamov A."/>
            <person name="Salazar A."/>
            <person name="She X."/>
            <person name="Smith D."/>
            <person name="Slezak T."/>
            <person name="Solovyev V."/>
            <person name="Thayer N."/>
            <person name="Tice H."/>
            <person name="Tsai M."/>
            <person name="Ustaszewska A."/>
            <person name="Vo N."/>
            <person name="Wagner M."/>
            <person name="Wheeler J."/>
            <person name="Wu K."/>
            <person name="Xie G."/>
            <person name="Yang J."/>
            <person name="Dubchak I."/>
            <person name="Furey T.S."/>
            <person name="DeJong P."/>
            <person name="Dickson M."/>
            <person name="Gordon D."/>
            <person name="Eichler E.E."/>
            <person name="Pennacchio L.A."/>
            <person name="Richardson P."/>
            <person name="Stubbs L."/>
            <person name="Rokhsar D.S."/>
            <person name="Myers R.M."/>
            <person name="Rubin E.M."/>
            <person name="Lucas S.M."/>
        </authorList>
    </citation>
    <scope>NUCLEOTIDE SEQUENCE [LARGE SCALE GENOMIC DNA]</scope>
</reference>
<reference key="3">
    <citation type="journal article" date="2004" name="Genome Res.">
        <title>The status, quality, and expansion of the NIH full-length cDNA project: the Mammalian Gene Collection (MGC).</title>
        <authorList>
            <consortium name="The MGC Project Team"/>
        </authorList>
    </citation>
    <scope>NUCLEOTIDE SEQUENCE [LARGE SCALE MRNA] (ISOFORMS 1 AND 2)</scope>
    <source>
        <tissue>Brain</tissue>
    </source>
</reference>
<organism>
    <name type="scientific">Homo sapiens</name>
    <name type="common">Human</name>
    <dbReference type="NCBI Taxonomy" id="9606"/>
    <lineage>
        <taxon>Eukaryota</taxon>
        <taxon>Metazoa</taxon>
        <taxon>Chordata</taxon>
        <taxon>Craniata</taxon>
        <taxon>Vertebrata</taxon>
        <taxon>Euteleostomi</taxon>
        <taxon>Mammalia</taxon>
        <taxon>Eutheria</taxon>
        <taxon>Euarchontoglires</taxon>
        <taxon>Primates</taxon>
        <taxon>Haplorrhini</taxon>
        <taxon>Catarrhini</taxon>
        <taxon>Hominidae</taxon>
        <taxon>Homo</taxon>
    </lineage>
</organism>
<name>ZN285_HUMAN</name>
<keyword id="KW-0025">Alternative splicing</keyword>
<keyword id="KW-0238">DNA-binding</keyword>
<keyword id="KW-0479">Metal-binding</keyword>
<keyword id="KW-0539">Nucleus</keyword>
<keyword id="KW-1267">Proteomics identification</keyword>
<keyword id="KW-1185">Reference proteome</keyword>
<keyword id="KW-0677">Repeat</keyword>
<keyword id="KW-0804">Transcription</keyword>
<keyword id="KW-0805">Transcription regulation</keyword>
<keyword id="KW-0862">Zinc</keyword>
<keyword id="KW-0863">Zinc-finger</keyword>
<protein>
    <recommendedName>
        <fullName>Zinc finger protein 285</fullName>
    </recommendedName>
    <alternativeName>
        <fullName>Zinc finger protein 285A</fullName>
    </alternativeName>
</protein>
<proteinExistence type="evidence at protein level"/>
<sequence>MIKFQERVTFKDVAVVFTKEELALLDKAQINLYQDVMLENFRNLMLVRDGIKNNILNLQAKGLSYLSQEVLHCWQIWKQRIRDLTVSQDYIVNLQEECSPHLEDVSLSEEWAGISLQISENENYVVNAIIKNQDITAWQSLTQVLTPESWRKANIMTEPQNSQGRYKGIYMEEKLYRRAQHDDSLSWTSCDHHESQECKGEDPGRHPSCGKNLGMKSTVEKRNAAHVLPQPFPCNNCGVAFADDTDPHVHHSTHLGEKSYKCDQYGKNFSQSQDLIVHCKTHSGKTPYEFHEWPMGCKQSSDLPRYQKVSSGDKPYKCKECGKGFRRSSSLHNHHRVHTGEMPYKCDECGKGFGFRSLLCIHQGVHTGKKPYKCEECGKGFDQSSNLLVHQRVHTGEKPYKCSECGKCFSSSSVLQVHWRFHTGEKPYRCGECGKGFSQCTHLHIHQRVHTGEKPYKCNVCGKDFAYSSVLHTHQRVHTGEKPYKCEVCGKCFSYSSYFHLHQRDHIREKPYKCDECGKGFSRNSDLNVHLRVHTGERPYKCKACGKGFSRNSYLLAHQRVHIDETQYTHCERGKDLLTHQRLHEQRETL</sequence>
<accession>Q96NJ3</accession>
<accession>Q17RJ3</accession>
<accession>Q6B0A8</accession>
<accession>Q6ISR5</accession>
<evidence type="ECO:0000255" key="1">
    <source>
        <dbReference type="PROSITE-ProRule" id="PRU00042"/>
    </source>
</evidence>
<evidence type="ECO:0000255" key="2">
    <source>
        <dbReference type="PROSITE-ProRule" id="PRU00119"/>
    </source>
</evidence>
<evidence type="ECO:0000303" key="3">
    <source>
    </source>
</evidence>
<evidence type="ECO:0000303" key="4">
    <source>
    </source>
</evidence>
<evidence type="ECO:0000305" key="5"/>
<comment type="function">
    <text>May be involved in transcriptional regulation.</text>
</comment>
<comment type="interaction">
    <interactant intactId="EBI-18064466">
        <id>Q96NJ3</id>
    </interactant>
    <interactant intactId="EBI-3866279">
        <id>Q9BWT7</id>
        <label>CARD10</label>
    </interactant>
    <organismsDiffer>false</organismsDiffer>
    <experiments>3</experiments>
</comment>
<comment type="subcellular location">
    <subcellularLocation>
        <location evidence="5">Nucleus</location>
    </subcellularLocation>
</comment>
<comment type="alternative products">
    <event type="alternative splicing"/>
    <isoform>
        <id>Q96NJ3-1</id>
        <name>1</name>
        <sequence type="displayed"/>
    </isoform>
    <isoform>
        <id>Q96NJ3-2</id>
        <name>2</name>
        <sequence type="described" ref="VSP_037502"/>
    </isoform>
</comment>
<comment type="similarity">
    <text evidence="5">Belongs to the krueppel C2H2-type zinc-finger protein family.</text>
</comment>